<keyword id="KW-0030">Aminoacyl-tRNA synthetase</keyword>
<keyword id="KW-0067">ATP-binding</keyword>
<keyword id="KW-0963">Cytoplasm</keyword>
<keyword id="KW-0436">Ligase</keyword>
<keyword id="KW-0479">Metal-binding</keyword>
<keyword id="KW-0547">Nucleotide-binding</keyword>
<keyword id="KW-0648">Protein biosynthesis</keyword>
<keyword id="KW-1185">Reference proteome</keyword>
<keyword id="KW-0862">Zinc</keyword>
<evidence type="ECO:0000255" key="1">
    <source>
        <dbReference type="HAMAP-Rule" id="MF_00041"/>
    </source>
</evidence>
<dbReference type="EC" id="6.1.1.16" evidence="1"/>
<dbReference type="EMBL" id="AE009951">
    <property type="protein sequence ID" value="AAL93694.1"/>
    <property type="molecule type" value="Genomic_DNA"/>
</dbReference>
<dbReference type="RefSeq" id="NP_602395.1">
    <property type="nucleotide sequence ID" value="NC_003454.1"/>
</dbReference>
<dbReference type="RefSeq" id="WP_011015680.1">
    <property type="nucleotide sequence ID" value="NZ_CP028101.1"/>
</dbReference>
<dbReference type="SMR" id="Q8RIK9"/>
<dbReference type="FunCoup" id="Q8RIK9">
    <property type="interactions" value="314"/>
</dbReference>
<dbReference type="STRING" id="190304.FN1579"/>
<dbReference type="PaxDb" id="190304-FN1579"/>
<dbReference type="EnsemblBacteria" id="AAL93694">
    <property type="protein sequence ID" value="AAL93694"/>
    <property type="gene ID" value="FN1579"/>
</dbReference>
<dbReference type="GeneID" id="79782520"/>
<dbReference type="KEGG" id="fnu:FN1579"/>
<dbReference type="PATRIC" id="fig|190304.8.peg.71"/>
<dbReference type="eggNOG" id="COG0215">
    <property type="taxonomic scope" value="Bacteria"/>
</dbReference>
<dbReference type="HOGENOM" id="CLU_013528_0_1_0"/>
<dbReference type="InParanoid" id="Q8RIK9"/>
<dbReference type="BioCyc" id="FNUC190304:G1FZS-83-MONOMER"/>
<dbReference type="Proteomes" id="UP000002521">
    <property type="component" value="Chromosome"/>
</dbReference>
<dbReference type="GO" id="GO:0005737">
    <property type="term" value="C:cytoplasm"/>
    <property type="evidence" value="ECO:0000318"/>
    <property type="project" value="GO_Central"/>
</dbReference>
<dbReference type="GO" id="GO:0005829">
    <property type="term" value="C:cytosol"/>
    <property type="evidence" value="ECO:0000318"/>
    <property type="project" value="GO_Central"/>
</dbReference>
<dbReference type="GO" id="GO:0005524">
    <property type="term" value="F:ATP binding"/>
    <property type="evidence" value="ECO:0000318"/>
    <property type="project" value="GO_Central"/>
</dbReference>
<dbReference type="GO" id="GO:0004817">
    <property type="term" value="F:cysteine-tRNA ligase activity"/>
    <property type="evidence" value="ECO:0000318"/>
    <property type="project" value="GO_Central"/>
</dbReference>
<dbReference type="GO" id="GO:0008270">
    <property type="term" value="F:zinc ion binding"/>
    <property type="evidence" value="ECO:0007669"/>
    <property type="project" value="UniProtKB-UniRule"/>
</dbReference>
<dbReference type="GO" id="GO:0006423">
    <property type="term" value="P:cysteinyl-tRNA aminoacylation"/>
    <property type="evidence" value="ECO:0000318"/>
    <property type="project" value="GO_Central"/>
</dbReference>
<dbReference type="CDD" id="cd00672">
    <property type="entry name" value="CysRS_core"/>
    <property type="match status" value="1"/>
</dbReference>
<dbReference type="FunFam" id="3.40.50.620:FF:000009">
    <property type="entry name" value="Cysteine--tRNA ligase"/>
    <property type="match status" value="1"/>
</dbReference>
<dbReference type="Gene3D" id="1.20.120.1910">
    <property type="entry name" value="Cysteine-tRNA ligase, C-terminal anti-codon recognition domain"/>
    <property type="match status" value="1"/>
</dbReference>
<dbReference type="Gene3D" id="3.40.50.620">
    <property type="entry name" value="HUPs"/>
    <property type="match status" value="1"/>
</dbReference>
<dbReference type="HAMAP" id="MF_00041">
    <property type="entry name" value="Cys_tRNA_synth"/>
    <property type="match status" value="1"/>
</dbReference>
<dbReference type="InterPro" id="IPR015803">
    <property type="entry name" value="Cys-tRNA-ligase"/>
</dbReference>
<dbReference type="InterPro" id="IPR015273">
    <property type="entry name" value="Cys-tRNA-synt_Ia_DALR"/>
</dbReference>
<dbReference type="InterPro" id="IPR024909">
    <property type="entry name" value="Cys-tRNA/MSH_ligase"/>
</dbReference>
<dbReference type="InterPro" id="IPR056411">
    <property type="entry name" value="CysS_C"/>
</dbReference>
<dbReference type="InterPro" id="IPR014729">
    <property type="entry name" value="Rossmann-like_a/b/a_fold"/>
</dbReference>
<dbReference type="InterPro" id="IPR032678">
    <property type="entry name" value="tRNA-synt_1_cat_dom"/>
</dbReference>
<dbReference type="InterPro" id="IPR009080">
    <property type="entry name" value="tRNAsynth_Ia_anticodon-bd"/>
</dbReference>
<dbReference type="NCBIfam" id="TIGR00435">
    <property type="entry name" value="cysS"/>
    <property type="match status" value="1"/>
</dbReference>
<dbReference type="PANTHER" id="PTHR10890:SF3">
    <property type="entry name" value="CYSTEINE--TRNA LIGASE, CYTOPLASMIC"/>
    <property type="match status" value="1"/>
</dbReference>
<dbReference type="PANTHER" id="PTHR10890">
    <property type="entry name" value="CYSTEINYL-TRNA SYNTHETASE"/>
    <property type="match status" value="1"/>
</dbReference>
<dbReference type="Pfam" id="PF23493">
    <property type="entry name" value="CysS_C"/>
    <property type="match status" value="1"/>
</dbReference>
<dbReference type="Pfam" id="PF09190">
    <property type="entry name" value="DALR_2"/>
    <property type="match status" value="1"/>
</dbReference>
<dbReference type="Pfam" id="PF01406">
    <property type="entry name" value="tRNA-synt_1e"/>
    <property type="match status" value="1"/>
</dbReference>
<dbReference type="PRINTS" id="PR00983">
    <property type="entry name" value="TRNASYNTHCYS"/>
</dbReference>
<dbReference type="SMART" id="SM00840">
    <property type="entry name" value="DALR_2"/>
    <property type="match status" value="1"/>
</dbReference>
<dbReference type="SUPFAM" id="SSF47323">
    <property type="entry name" value="Anticodon-binding domain of a subclass of class I aminoacyl-tRNA synthetases"/>
    <property type="match status" value="1"/>
</dbReference>
<dbReference type="SUPFAM" id="SSF52374">
    <property type="entry name" value="Nucleotidylyl transferase"/>
    <property type="match status" value="1"/>
</dbReference>
<proteinExistence type="inferred from homology"/>
<protein>
    <recommendedName>
        <fullName evidence="1">Cysteine--tRNA ligase</fullName>
        <ecNumber evidence="1">6.1.1.16</ecNumber>
    </recommendedName>
    <alternativeName>
        <fullName evidence="1">Cysteinyl-tRNA synthetase</fullName>
        <shortName evidence="1">CysRS</shortName>
    </alternativeName>
</protein>
<comment type="catalytic activity">
    <reaction evidence="1">
        <text>tRNA(Cys) + L-cysteine + ATP = L-cysteinyl-tRNA(Cys) + AMP + diphosphate</text>
        <dbReference type="Rhea" id="RHEA:17773"/>
        <dbReference type="Rhea" id="RHEA-COMP:9661"/>
        <dbReference type="Rhea" id="RHEA-COMP:9679"/>
        <dbReference type="ChEBI" id="CHEBI:30616"/>
        <dbReference type="ChEBI" id="CHEBI:33019"/>
        <dbReference type="ChEBI" id="CHEBI:35235"/>
        <dbReference type="ChEBI" id="CHEBI:78442"/>
        <dbReference type="ChEBI" id="CHEBI:78517"/>
        <dbReference type="ChEBI" id="CHEBI:456215"/>
        <dbReference type="EC" id="6.1.1.16"/>
    </reaction>
</comment>
<comment type="cofactor">
    <cofactor evidence="1">
        <name>Zn(2+)</name>
        <dbReference type="ChEBI" id="CHEBI:29105"/>
    </cofactor>
    <text evidence="1">Binds 1 zinc ion per subunit.</text>
</comment>
<comment type="subunit">
    <text evidence="1">Monomer.</text>
</comment>
<comment type="subcellular location">
    <subcellularLocation>
        <location evidence="1">Cytoplasm</location>
    </subcellularLocation>
</comment>
<comment type="similarity">
    <text evidence="1">Belongs to the class-I aminoacyl-tRNA synthetase family.</text>
</comment>
<gene>
    <name evidence="1" type="primary">cysS</name>
    <name type="ordered locus">FN1579</name>
</gene>
<name>SYC_FUSNN</name>
<feature type="chain" id="PRO_0000159400" description="Cysteine--tRNA ligase">
    <location>
        <begin position="1"/>
        <end position="473"/>
    </location>
</feature>
<feature type="short sequence motif" description="'HIGH' region">
    <location>
        <begin position="30"/>
        <end position="40"/>
    </location>
</feature>
<feature type="short sequence motif" description="'KMSKS' region">
    <location>
        <begin position="267"/>
        <end position="271"/>
    </location>
</feature>
<feature type="binding site" evidence="1">
    <location>
        <position position="28"/>
    </location>
    <ligand>
        <name>Zn(2+)</name>
        <dbReference type="ChEBI" id="CHEBI:29105"/>
    </ligand>
</feature>
<feature type="binding site" evidence="1">
    <location>
        <position position="210"/>
    </location>
    <ligand>
        <name>Zn(2+)</name>
        <dbReference type="ChEBI" id="CHEBI:29105"/>
    </ligand>
</feature>
<feature type="binding site" evidence="1">
    <location>
        <position position="235"/>
    </location>
    <ligand>
        <name>Zn(2+)</name>
        <dbReference type="ChEBI" id="CHEBI:29105"/>
    </ligand>
</feature>
<feature type="binding site" evidence="1">
    <location>
        <position position="239"/>
    </location>
    <ligand>
        <name>Zn(2+)</name>
        <dbReference type="ChEBI" id="CHEBI:29105"/>
    </ligand>
</feature>
<feature type="binding site" evidence="1">
    <location>
        <position position="270"/>
    </location>
    <ligand>
        <name>ATP</name>
        <dbReference type="ChEBI" id="CHEBI:30616"/>
    </ligand>
</feature>
<organism>
    <name type="scientific">Fusobacterium nucleatum subsp. nucleatum (strain ATCC 25586 / DSM 15643 / BCRC 10681 / CIP 101130 / JCM 8532 / KCTC 2640 / LMG 13131 / VPI 4355)</name>
    <dbReference type="NCBI Taxonomy" id="190304"/>
    <lineage>
        <taxon>Bacteria</taxon>
        <taxon>Fusobacteriati</taxon>
        <taxon>Fusobacteriota</taxon>
        <taxon>Fusobacteriia</taxon>
        <taxon>Fusobacteriales</taxon>
        <taxon>Fusobacteriaceae</taxon>
        <taxon>Fusobacterium</taxon>
    </lineage>
</organism>
<accession>Q8RIK9</accession>
<sequence>MIKIYNTLTGHLDEFKPLKENEVSMYVCGPTVYNYIHIGNARPAIFFDTVRRYLEYRGYKVNYVQNFTDVDDKMINKANIENVSIKEIAERYIKAYFEDTSKINLKEEGMIRPKATENINEMIEIIQSLVDKGYAYESNGDVYFEVKKYRDGYGELSKQNIEDLESGARIDVNEIKRDALDFALWKASKPNEPSWDSPWGKGRPGWHIECSAMSRKYLGDSFDIHGGGLDLIFPHHENEMAQSKCGCGGTFAKYWMHNGYININGEKMSKSSGSFVLLRDILKYFEGRVIRLFVLGSHYRKPMEFSDTELNQTKSSLERIENTLKRIKELDRENIKGIDDCQELLATKKEMEAKFIEAMNEDFNTAQALGHIFELVKAVNKTLDEANISKKGLEVIDEVYSYLVMIIQDVLGVQLKLEVEVNNISADLIELILELRRNAREEKNWALSDKIRDRLLELGIKIKDGKDKTTWTM</sequence>
<reference key="1">
    <citation type="journal article" date="2002" name="J. Bacteriol.">
        <title>Genome sequence and analysis of the oral bacterium Fusobacterium nucleatum strain ATCC 25586.</title>
        <authorList>
            <person name="Kapatral V."/>
            <person name="Anderson I."/>
            <person name="Ivanova N."/>
            <person name="Reznik G."/>
            <person name="Los T."/>
            <person name="Lykidis A."/>
            <person name="Bhattacharyya A."/>
            <person name="Bartman A."/>
            <person name="Gardner W."/>
            <person name="Grechkin G."/>
            <person name="Zhu L."/>
            <person name="Vasieva O."/>
            <person name="Chu L."/>
            <person name="Kogan Y."/>
            <person name="Chaga O."/>
            <person name="Goltsman E."/>
            <person name="Bernal A."/>
            <person name="Larsen N."/>
            <person name="D'Souza M."/>
            <person name="Walunas T."/>
            <person name="Pusch G."/>
            <person name="Haselkorn R."/>
            <person name="Fonstein M."/>
            <person name="Kyrpides N.C."/>
            <person name="Overbeek R."/>
        </authorList>
    </citation>
    <scope>NUCLEOTIDE SEQUENCE [LARGE SCALE GENOMIC DNA]</scope>
    <source>
        <strain>ATCC 25586 / DSM 15643 / BCRC 10681 / CIP 101130 / JCM 8532 / KCTC 2640 / LMG 13131 / VPI 4355</strain>
    </source>
</reference>